<proteinExistence type="inferred from homology"/>
<sequence>MSEAVPTSARKSKNAPVAPGPAPVLEIESLDMEARGVGRTVTEDGTPGKVIFVEGALPGERVTYSSYRRKPSYEQATVVDILRPSVLRTQPKCAFFGTCGGCSMQHLDMRAQVAIKQRVLEDNLWHLAKLRAETVFAPIHGPSWGYRYRARLTVRNVAKKGGVLVGFHEKKSSYVADMTSCEVLPPHVSAMLVPLRRLVEGLSIRDRMPQIELAVGSQVTALVLRVLEPINADDEALLRAFADEHKVQFWLQPKGPDTVTPFYPLDVPLDYTLPEFGIRMPFKPTDFTQVNHQINRVLVGRALRLLAPSRDDRVLDLFCGIGNFTLPLARLSREVMGIEGSDTLTTRALANARENGVDGHTTFACRNLFEVTGDDLRALGAFDKFLIDPPREGALAVSKALAEIAQSGEGPLPKRIVYVSCNPSTLARDAGLLVHEAGYRLKGAGVVNMFPNTSHVESIALFERG</sequence>
<evidence type="ECO:0000255" key="1">
    <source>
        <dbReference type="HAMAP-Rule" id="MF_01010"/>
    </source>
</evidence>
<evidence type="ECO:0000256" key="2">
    <source>
        <dbReference type="SAM" id="MobiDB-lite"/>
    </source>
</evidence>
<evidence type="ECO:0000305" key="3"/>
<keyword id="KW-0004">4Fe-4S</keyword>
<keyword id="KW-0408">Iron</keyword>
<keyword id="KW-0411">Iron-sulfur</keyword>
<keyword id="KW-0479">Metal-binding</keyword>
<keyword id="KW-0489">Methyltransferase</keyword>
<keyword id="KW-0698">rRNA processing</keyword>
<keyword id="KW-0949">S-adenosyl-L-methionine</keyword>
<keyword id="KW-0808">Transferase</keyword>
<protein>
    <recommendedName>
        <fullName evidence="1">23S rRNA (uracil(1939)-C(5))-methyltransferase RlmD</fullName>
        <ecNumber evidence="1">2.1.1.190</ecNumber>
    </recommendedName>
    <alternativeName>
        <fullName evidence="1">23S rRNA(m5U1939)-methyltransferase</fullName>
    </alternativeName>
</protein>
<reference key="1">
    <citation type="submission" date="2006-08" db="EMBL/GenBank/DDBJ databases">
        <title>Complete sequence of chromosome 1 of Burkholderia cepacia AMMD.</title>
        <authorList>
            <person name="Copeland A."/>
            <person name="Lucas S."/>
            <person name="Lapidus A."/>
            <person name="Barry K."/>
            <person name="Detter J.C."/>
            <person name="Glavina del Rio T."/>
            <person name="Hammon N."/>
            <person name="Israni S."/>
            <person name="Pitluck S."/>
            <person name="Bruce D."/>
            <person name="Chain P."/>
            <person name="Malfatti S."/>
            <person name="Shin M."/>
            <person name="Vergez L."/>
            <person name="Schmutz J."/>
            <person name="Larimer F."/>
            <person name="Land M."/>
            <person name="Hauser L."/>
            <person name="Kyrpides N."/>
            <person name="Kim E."/>
            <person name="Parke J."/>
            <person name="Coenye T."/>
            <person name="Konstantinidis K."/>
            <person name="Ramette A."/>
            <person name="Tiedje J."/>
            <person name="Richardson P."/>
        </authorList>
    </citation>
    <scope>NUCLEOTIDE SEQUENCE [LARGE SCALE GENOMIC DNA]</scope>
    <source>
        <strain>ATCC BAA-244 / DSM 16087 / CCUG 44356 / LMG 19182 / AMMD</strain>
    </source>
</reference>
<name>RLMD_BURCM</name>
<accession>Q0BEW2</accession>
<feature type="chain" id="PRO_0000282033" description="23S rRNA (uracil(1939)-C(5))-methyltransferase RlmD">
    <location>
        <begin position="1"/>
        <end position="465"/>
    </location>
</feature>
<feature type="domain" description="TRAM" evidence="1">
    <location>
        <begin position="16"/>
        <end position="80"/>
    </location>
</feature>
<feature type="region of interest" description="Disordered" evidence="2">
    <location>
        <begin position="1"/>
        <end position="22"/>
    </location>
</feature>
<feature type="active site" description="Nucleophile" evidence="1">
    <location>
        <position position="421"/>
    </location>
</feature>
<feature type="binding site" evidence="1">
    <location>
        <position position="93"/>
    </location>
    <ligand>
        <name>[4Fe-4S] cluster</name>
        <dbReference type="ChEBI" id="CHEBI:49883"/>
    </ligand>
</feature>
<feature type="binding site" evidence="1">
    <location>
        <position position="99"/>
    </location>
    <ligand>
        <name>[4Fe-4S] cluster</name>
        <dbReference type="ChEBI" id="CHEBI:49883"/>
    </ligand>
</feature>
<feature type="binding site" evidence="1">
    <location>
        <position position="102"/>
    </location>
    <ligand>
        <name>[4Fe-4S] cluster</name>
        <dbReference type="ChEBI" id="CHEBI:49883"/>
    </ligand>
</feature>
<feature type="binding site" evidence="1">
    <location>
        <position position="181"/>
    </location>
    <ligand>
        <name>[4Fe-4S] cluster</name>
        <dbReference type="ChEBI" id="CHEBI:49883"/>
    </ligand>
</feature>
<feature type="binding site" evidence="1">
    <location>
        <position position="289"/>
    </location>
    <ligand>
        <name>S-adenosyl-L-methionine</name>
        <dbReference type="ChEBI" id="CHEBI:59789"/>
    </ligand>
</feature>
<feature type="binding site" evidence="1">
    <location>
        <position position="318"/>
    </location>
    <ligand>
        <name>S-adenosyl-L-methionine</name>
        <dbReference type="ChEBI" id="CHEBI:59789"/>
    </ligand>
</feature>
<feature type="binding site" evidence="1">
    <location>
        <position position="323"/>
    </location>
    <ligand>
        <name>S-adenosyl-L-methionine</name>
        <dbReference type="ChEBI" id="CHEBI:59789"/>
    </ligand>
</feature>
<feature type="binding site" evidence="1">
    <location>
        <position position="339"/>
    </location>
    <ligand>
        <name>S-adenosyl-L-methionine</name>
        <dbReference type="ChEBI" id="CHEBI:59789"/>
    </ligand>
</feature>
<feature type="binding site" evidence="1">
    <location>
        <position position="367"/>
    </location>
    <ligand>
        <name>S-adenosyl-L-methionine</name>
        <dbReference type="ChEBI" id="CHEBI:59789"/>
    </ligand>
</feature>
<feature type="binding site" evidence="1">
    <location>
        <position position="388"/>
    </location>
    <ligand>
        <name>S-adenosyl-L-methionine</name>
        <dbReference type="ChEBI" id="CHEBI:59789"/>
    </ligand>
</feature>
<gene>
    <name evidence="1" type="primary">rlmD</name>
    <name type="synonym">rumA</name>
    <name type="ordered locus">Bamb_1755</name>
</gene>
<organism>
    <name type="scientific">Burkholderia ambifaria (strain ATCC BAA-244 / DSM 16087 / CCUG 44356 / LMG 19182 / AMMD)</name>
    <name type="common">Burkholderia cepacia (strain AMMD)</name>
    <dbReference type="NCBI Taxonomy" id="339670"/>
    <lineage>
        <taxon>Bacteria</taxon>
        <taxon>Pseudomonadati</taxon>
        <taxon>Pseudomonadota</taxon>
        <taxon>Betaproteobacteria</taxon>
        <taxon>Burkholderiales</taxon>
        <taxon>Burkholderiaceae</taxon>
        <taxon>Burkholderia</taxon>
        <taxon>Burkholderia cepacia complex</taxon>
    </lineage>
</organism>
<comment type="function">
    <text evidence="1">Catalyzes the formation of 5-methyl-uridine at position 1939 (m5U1939) in 23S rRNA.</text>
</comment>
<comment type="catalytic activity">
    <reaction evidence="1">
        <text>uridine(1939) in 23S rRNA + S-adenosyl-L-methionine = 5-methyluridine(1939) in 23S rRNA + S-adenosyl-L-homocysteine + H(+)</text>
        <dbReference type="Rhea" id="RHEA:42908"/>
        <dbReference type="Rhea" id="RHEA-COMP:10278"/>
        <dbReference type="Rhea" id="RHEA-COMP:10279"/>
        <dbReference type="ChEBI" id="CHEBI:15378"/>
        <dbReference type="ChEBI" id="CHEBI:57856"/>
        <dbReference type="ChEBI" id="CHEBI:59789"/>
        <dbReference type="ChEBI" id="CHEBI:65315"/>
        <dbReference type="ChEBI" id="CHEBI:74447"/>
        <dbReference type="EC" id="2.1.1.190"/>
    </reaction>
</comment>
<comment type="similarity">
    <text evidence="1">Belongs to the class I-like SAM-binding methyltransferase superfamily. RNA M5U methyltransferase family. RlmD subfamily.</text>
</comment>
<comment type="sequence caution" evidence="3">
    <conflict type="erroneous initiation">
        <sequence resource="EMBL-CDS" id="ABI87311"/>
    </conflict>
</comment>
<dbReference type="EC" id="2.1.1.190" evidence="1"/>
<dbReference type="EMBL" id="CP000440">
    <property type="protein sequence ID" value="ABI87311.1"/>
    <property type="status" value="ALT_INIT"/>
    <property type="molecule type" value="Genomic_DNA"/>
</dbReference>
<dbReference type="RefSeq" id="WP_011657024.1">
    <property type="nucleotide sequence ID" value="NZ_CP009798.1"/>
</dbReference>
<dbReference type="SMR" id="Q0BEW2"/>
<dbReference type="GeneID" id="93086038"/>
<dbReference type="KEGG" id="bam:Bamb_1755"/>
<dbReference type="PATRIC" id="fig|339670.21.peg.3205"/>
<dbReference type="eggNOG" id="COG2265">
    <property type="taxonomic scope" value="Bacteria"/>
</dbReference>
<dbReference type="Proteomes" id="UP000000662">
    <property type="component" value="Chromosome 1"/>
</dbReference>
<dbReference type="GO" id="GO:0051539">
    <property type="term" value="F:4 iron, 4 sulfur cluster binding"/>
    <property type="evidence" value="ECO:0007669"/>
    <property type="project" value="UniProtKB-KW"/>
</dbReference>
<dbReference type="GO" id="GO:0005506">
    <property type="term" value="F:iron ion binding"/>
    <property type="evidence" value="ECO:0007669"/>
    <property type="project" value="UniProtKB-UniRule"/>
</dbReference>
<dbReference type="GO" id="GO:0003723">
    <property type="term" value="F:RNA binding"/>
    <property type="evidence" value="ECO:0007669"/>
    <property type="project" value="InterPro"/>
</dbReference>
<dbReference type="GO" id="GO:0070041">
    <property type="term" value="F:rRNA (uridine-C5-)-methyltransferase activity"/>
    <property type="evidence" value="ECO:0007669"/>
    <property type="project" value="UniProtKB-UniRule"/>
</dbReference>
<dbReference type="GO" id="GO:0070475">
    <property type="term" value="P:rRNA base methylation"/>
    <property type="evidence" value="ECO:0007669"/>
    <property type="project" value="TreeGrafter"/>
</dbReference>
<dbReference type="CDD" id="cd02440">
    <property type="entry name" value="AdoMet_MTases"/>
    <property type="match status" value="1"/>
</dbReference>
<dbReference type="Gene3D" id="2.40.50.1070">
    <property type="match status" value="1"/>
</dbReference>
<dbReference type="Gene3D" id="2.40.50.140">
    <property type="entry name" value="Nucleic acid-binding proteins"/>
    <property type="match status" value="1"/>
</dbReference>
<dbReference type="Gene3D" id="3.40.50.150">
    <property type="entry name" value="Vaccinia Virus protein VP39"/>
    <property type="match status" value="1"/>
</dbReference>
<dbReference type="HAMAP" id="MF_01010">
    <property type="entry name" value="23SrRNA_methyltr_RlmD"/>
    <property type="match status" value="1"/>
</dbReference>
<dbReference type="InterPro" id="IPR001566">
    <property type="entry name" value="23S_rRNA_MeTrfase_RlmD"/>
</dbReference>
<dbReference type="InterPro" id="IPR012340">
    <property type="entry name" value="NA-bd_OB-fold"/>
</dbReference>
<dbReference type="InterPro" id="IPR029063">
    <property type="entry name" value="SAM-dependent_MTases_sf"/>
</dbReference>
<dbReference type="InterPro" id="IPR002792">
    <property type="entry name" value="TRAM_dom"/>
</dbReference>
<dbReference type="InterPro" id="IPR010280">
    <property type="entry name" value="U5_MeTrfase_fam"/>
</dbReference>
<dbReference type="NCBIfam" id="NF009639">
    <property type="entry name" value="PRK13168.1"/>
    <property type="match status" value="1"/>
</dbReference>
<dbReference type="PANTHER" id="PTHR11061:SF49">
    <property type="entry name" value="23S RRNA (URACIL(1939)-C(5))-METHYLTRANSFERASE RLMD"/>
    <property type="match status" value="1"/>
</dbReference>
<dbReference type="PANTHER" id="PTHR11061">
    <property type="entry name" value="RNA M5U METHYLTRANSFERASE"/>
    <property type="match status" value="1"/>
</dbReference>
<dbReference type="Pfam" id="PF05958">
    <property type="entry name" value="tRNA_U5-meth_tr"/>
    <property type="match status" value="1"/>
</dbReference>
<dbReference type="SUPFAM" id="SSF50249">
    <property type="entry name" value="Nucleic acid-binding proteins"/>
    <property type="match status" value="1"/>
</dbReference>
<dbReference type="SUPFAM" id="SSF53335">
    <property type="entry name" value="S-adenosyl-L-methionine-dependent methyltransferases"/>
    <property type="match status" value="1"/>
</dbReference>
<dbReference type="PROSITE" id="PS51687">
    <property type="entry name" value="SAM_MT_RNA_M5U"/>
    <property type="match status" value="1"/>
</dbReference>
<dbReference type="PROSITE" id="PS50926">
    <property type="entry name" value="TRAM"/>
    <property type="match status" value="1"/>
</dbReference>